<comment type="function">
    <text evidence="2 3 4 6">Atypical and probable non DNA-binding bHLH transcription factor required for MONOPTEROS-dependent root initiation in embryo. Promotes the correct definition of the hypophysis cell division plane. Transcriptionally controlled by MONOPTEROS. Moves from its site of synthesis in pro-embryos cells into the hypophysis. Regulates brassinosteroid (BR) signaling by sequestering negative BR signaling components. May function as positive regulator of gibberellin signaling. May play a role in the regulation of light signaling and possibly auxin signaling.</text>
</comment>
<comment type="subunit">
    <text evidence="3 5 7 8">Homodimer (Probable). Interacts with BHLH 147, BHLH148, BHLH149, BHLH150 and IBH1. Interacts with SIEL (PubMed:21924907).</text>
</comment>
<comment type="subcellular location">
    <subcellularLocation>
        <location evidence="3 4">Nucleus</location>
    </subcellularLocation>
    <subcellularLocation>
        <location evidence="4">Cytoplasm</location>
    </subcellularLocation>
</comment>
<comment type="tissue specificity">
    <text evidence="2 3 6">Expressed in root and shoot meristems, and young siliques. Low levels detected in all aerial tissues.</text>
</comment>
<comment type="developmental stage">
    <text evidence="4">At the globular stage, expressed in cells adjacent to the hypophysis and at later embryonic stages, restricted to the future root stem cells.</text>
</comment>
<comment type="induction">
    <text evidence="2">Not induced by exogenous gibberellin.</text>
</comment>
<comment type="miscellaneous">
    <text evidence="9 10">Plants over-expressing PRE3 show long hypocotyls, pale green and slightly narrow leaves, elongated petioles and early flowering. They are not sensitive to the gibberellin inhibitor paclobutrazol during seed germination (PubMed:16527868, PubMed:22339648).</text>
</comment>
<gene>
    <name type="primary">PRE3</name>
    <name type="synonym">BHLH135</name>
    <name type="synonym">BS1</name>
    <name type="synonym">EN67</name>
    <name type="synonym">TMO7</name>
    <name type="ordered locus">At1g74500</name>
    <name type="ORF">F1M20.18</name>
</gene>
<feature type="chain" id="PRO_0000358817" description="Transcription factor PRE3">
    <location>
        <begin position="1"/>
        <end position="93"/>
    </location>
</feature>
<feature type="domain" description="bHLH" evidence="1">
    <location>
        <begin position="6"/>
        <end position="61"/>
    </location>
</feature>
<evidence type="ECO:0000255" key="1">
    <source>
        <dbReference type="PROSITE-ProRule" id="PRU00981"/>
    </source>
</evidence>
<evidence type="ECO:0000269" key="2">
    <source>
    </source>
</evidence>
<evidence type="ECO:0000269" key="3">
    <source>
    </source>
</evidence>
<evidence type="ECO:0000269" key="4">
    <source>
    </source>
</evidence>
<evidence type="ECO:0000269" key="5">
    <source>
    </source>
</evidence>
<evidence type="ECO:0000269" key="6">
    <source>
    </source>
</evidence>
<evidence type="ECO:0000269" key="7">
    <source>
    </source>
</evidence>
<evidence type="ECO:0000305" key="8"/>
<evidence type="ECO:0000305" key="9">
    <source>
    </source>
</evidence>
<evidence type="ECO:0000305" key="10">
    <source>
    </source>
</evidence>
<proteinExistence type="evidence at protein level"/>
<organism>
    <name type="scientific">Arabidopsis thaliana</name>
    <name type="common">Mouse-ear cress</name>
    <dbReference type="NCBI Taxonomy" id="3702"/>
    <lineage>
        <taxon>Eukaryota</taxon>
        <taxon>Viridiplantae</taxon>
        <taxon>Streptophyta</taxon>
        <taxon>Embryophyta</taxon>
        <taxon>Tracheophyta</taxon>
        <taxon>Spermatophyta</taxon>
        <taxon>Magnoliopsida</taxon>
        <taxon>eudicotyledons</taxon>
        <taxon>Gunneridae</taxon>
        <taxon>Pentapetalae</taxon>
        <taxon>rosids</taxon>
        <taxon>malvids</taxon>
        <taxon>Brassicales</taxon>
        <taxon>Brassicaceae</taxon>
        <taxon>Camelineae</taxon>
        <taxon>Arabidopsis</taxon>
    </lineage>
</organism>
<name>PRE3_ARATH</name>
<protein>
    <recommendedName>
        <fullName>Transcription factor PRE3</fullName>
    </recommendedName>
    <alternativeName>
        <fullName>Basic helix-loop-helix protein 135</fullName>
        <shortName>AtbHLH135</shortName>
        <shortName>bHLH 135</shortName>
    </alternativeName>
    <alternativeName>
        <fullName>Protein ACTIVATION-TAGGED BRI1 SUPPRESSOR 1</fullName>
        <shortName>ATBS1</shortName>
    </alternativeName>
    <alternativeName>
        <fullName>Protein PACLOBUTRAZOL RESISTANCE 3</fullName>
    </alternativeName>
    <alternativeName>
        <fullName>Protein TARGET OF MOOPTEROS 7</fullName>
    </alternativeName>
    <alternativeName>
        <fullName>Transcription factor EN 67</fullName>
    </alternativeName>
    <alternativeName>
        <fullName>bHLH transcription factor bHLH135</fullName>
    </alternativeName>
</protein>
<keyword id="KW-1070">Brassinosteroid signaling pathway</keyword>
<keyword id="KW-0963">Cytoplasm</keyword>
<keyword id="KW-0939">Gibberellin signaling pathway</keyword>
<keyword id="KW-0341">Growth regulation</keyword>
<keyword id="KW-0539">Nucleus</keyword>
<keyword id="KW-1185">Reference proteome</keyword>
<keyword id="KW-0804">Transcription</keyword>
<keyword id="KW-0805">Transcription regulation</keyword>
<reference key="1">
    <citation type="journal article" date="2000" name="Nature">
        <title>Sequence and analysis of chromosome 1 of the plant Arabidopsis thaliana.</title>
        <authorList>
            <person name="Theologis A."/>
            <person name="Ecker J.R."/>
            <person name="Palm C.J."/>
            <person name="Federspiel N.A."/>
            <person name="Kaul S."/>
            <person name="White O."/>
            <person name="Alonso J."/>
            <person name="Altafi H."/>
            <person name="Araujo R."/>
            <person name="Bowman C.L."/>
            <person name="Brooks S.Y."/>
            <person name="Buehler E."/>
            <person name="Chan A."/>
            <person name="Chao Q."/>
            <person name="Chen H."/>
            <person name="Cheuk R.F."/>
            <person name="Chin C.W."/>
            <person name="Chung M.K."/>
            <person name="Conn L."/>
            <person name="Conway A.B."/>
            <person name="Conway A.R."/>
            <person name="Creasy T.H."/>
            <person name="Dewar K."/>
            <person name="Dunn P."/>
            <person name="Etgu P."/>
            <person name="Feldblyum T.V."/>
            <person name="Feng J.-D."/>
            <person name="Fong B."/>
            <person name="Fujii C.Y."/>
            <person name="Gill J.E."/>
            <person name="Goldsmith A.D."/>
            <person name="Haas B."/>
            <person name="Hansen N.F."/>
            <person name="Hughes B."/>
            <person name="Huizar L."/>
            <person name="Hunter J.L."/>
            <person name="Jenkins J."/>
            <person name="Johnson-Hopson C."/>
            <person name="Khan S."/>
            <person name="Khaykin E."/>
            <person name="Kim C.J."/>
            <person name="Koo H.L."/>
            <person name="Kremenetskaia I."/>
            <person name="Kurtz D.B."/>
            <person name="Kwan A."/>
            <person name="Lam B."/>
            <person name="Langin-Hooper S."/>
            <person name="Lee A."/>
            <person name="Lee J.M."/>
            <person name="Lenz C.A."/>
            <person name="Li J.H."/>
            <person name="Li Y.-P."/>
            <person name="Lin X."/>
            <person name="Liu S.X."/>
            <person name="Liu Z.A."/>
            <person name="Luros J.S."/>
            <person name="Maiti R."/>
            <person name="Marziali A."/>
            <person name="Militscher J."/>
            <person name="Miranda M."/>
            <person name="Nguyen M."/>
            <person name="Nierman W.C."/>
            <person name="Osborne B.I."/>
            <person name="Pai G."/>
            <person name="Peterson J."/>
            <person name="Pham P.K."/>
            <person name="Rizzo M."/>
            <person name="Rooney T."/>
            <person name="Rowley D."/>
            <person name="Sakano H."/>
            <person name="Salzberg S.L."/>
            <person name="Schwartz J.R."/>
            <person name="Shinn P."/>
            <person name="Southwick A.M."/>
            <person name="Sun H."/>
            <person name="Tallon L.J."/>
            <person name="Tambunga G."/>
            <person name="Toriumi M.J."/>
            <person name="Town C.D."/>
            <person name="Utterback T."/>
            <person name="Van Aken S."/>
            <person name="Vaysberg M."/>
            <person name="Vysotskaia V.S."/>
            <person name="Walker M."/>
            <person name="Wu D."/>
            <person name="Yu G."/>
            <person name="Fraser C.M."/>
            <person name="Venter J.C."/>
            <person name="Davis R.W."/>
        </authorList>
    </citation>
    <scope>NUCLEOTIDE SEQUENCE [LARGE SCALE GENOMIC DNA]</scope>
    <source>
        <strain>cv. Columbia</strain>
    </source>
</reference>
<reference key="2">
    <citation type="journal article" date="2017" name="Plant J.">
        <title>Araport11: a complete reannotation of the Arabidopsis thaliana reference genome.</title>
        <authorList>
            <person name="Cheng C.Y."/>
            <person name="Krishnakumar V."/>
            <person name="Chan A.P."/>
            <person name="Thibaud-Nissen F."/>
            <person name="Schobel S."/>
            <person name="Town C.D."/>
        </authorList>
    </citation>
    <scope>GENOME REANNOTATION</scope>
    <source>
        <strain>cv. Columbia</strain>
    </source>
</reference>
<reference key="3">
    <citation type="journal article" date="2003" name="Science">
        <title>Empirical analysis of transcriptional activity in the Arabidopsis genome.</title>
        <authorList>
            <person name="Yamada K."/>
            <person name="Lim J."/>
            <person name="Dale J.M."/>
            <person name="Chen H."/>
            <person name="Shinn P."/>
            <person name="Palm C.J."/>
            <person name="Southwick A.M."/>
            <person name="Wu H.C."/>
            <person name="Kim C.J."/>
            <person name="Nguyen M."/>
            <person name="Pham P.K."/>
            <person name="Cheuk R.F."/>
            <person name="Karlin-Newmann G."/>
            <person name="Liu S.X."/>
            <person name="Lam B."/>
            <person name="Sakano H."/>
            <person name="Wu T."/>
            <person name="Yu G."/>
            <person name="Miranda M."/>
            <person name="Quach H.L."/>
            <person name="Tripp M."/>
            <person name="Chang C.H."/>
            <person name="Lee J.M."/>
            <person name="Toriumi M.J."/>
            <person name="Chan M.M."/>
            <person name="Tang C.C."/>
            <person name="Onodera C.S."/>
            <person name="Deng J.M."/>
            <person name="Akiyama K."/>
            <person name="Ansari Y."/>
            <person name="Arakawa T."/>
            <person name="Banh J."/>
            <person name="Banno F."/>
            <person name="Bowser L."/>
            <person name="Brooks S.Y."/>
            <person name="Carninci P."/>
            <person name="Chao Q."/>
            <person name="Choy N."/>
            <person name="Enju A."/>
            <person name="Goldsmith A.D."/>
            <person name="Gurjal M."/>
            <person name="Hansen N.F."/>
            <person name="Hayashizaki Y."/>
            <person name="Johnson-Hopson C."/>
            <person name="Hsuan V.W."/>
            <person name="Iida K."/>
            <person name="Karnes M."/>
            <person name="Khan S."/>
            <person name="Koesema E."/>
            <person name="Ishida J."/>
            <person name="Jiang P.X."/>
            <person name="Jones T."/>
            <person name="Kawai J."/>
            <person name="Kamiya A."/>
            <person name="Meyers C."/>
            <person name="Nakajima M."/>
            <person name="Narusaka M."/>
            <person name="Seki M."/>
            <person name="Sakurai T."/>
            <person name="Satou M."/>
            <person name="Tamse R."/>
            <person name="Vaysberg M."/>
            <person name="Wallender E.K."/>
            <person name="Wong C."/>
            <person name="Yamamura Y."/>
            <person name="Yuan S."/>
            <person name="Shinozaki K."/>
            <person name="Davis R.W."/>
            <person name="Theologis A."/>
            <person name="Ecker J.R."/>
        </authorList>
    </citation>
    <scope>NUCLEOTIDE SEQUENCE [LARGE SCALE MRNA]</scope>
    <source>
        <strain>cv. Columbia</strain>
    </source>
</reference>
<reference key="4">
    <citation type="submission" date="2006-07" db="EMBL/GenBank/DDBJ databases">
        <title>Large-scale analysis of RIKEN Arabidopsis full-length (RAFL) cDNAs.</title>
        <authorList>
            <person name="Totoki Y."/>
            <person name="Seki M."/>
            <person name="Ishida J."/>
            <person name="Nakajima M."/>
            <person name="Enju A."/>
            <person name="Kamiya A."/>
            <person name="Narusaka M."/>
            <person name="Shin-i T."/>
            <person name="Nakagawa M."/>
            <person name="Sakamoto N."/>
            <person name="Oishi K."/>
            <person name="Kohara Y."/>
            <person name="Kobayashi M."/>
            <person name="Toyoda A."/>
            <person name="Sakaki Y."/>
            <person name="Sakurai T."/>
            <person name="Iida K."/>
            <person name="Akiyama K."/>
            <person name="Satou M."/>
            <person name="Toyoda T."/>
            <person name="Konagaya A."/>
            <person name="Carninci P."/>
            <person name="Kawai J."/>
            <person name="Hayashizaki Y."/>
            <person name="Shinozaki K."/>
        </authorList>
    </citation>
    <scope>NUCLEOTIDE SEQUENCE [LARGE SCALE MRNA]</scope>
    <source>
        <strain>cv. Columbia</strain>
    </source>
</reference>
<reference key="5">
    <citation type="submission" date="2002-03" db="EMBL/GenBank/DDBJ databases">
        <title>Full-length cDNA from Arabidopsis thaliana.</title>
        <authorList>
            <person name="Brover V.V."/>
            <person name="Troukhan M.E."/>
            <person name="Alexandrov N.A."/>
            <person name="Lu Y.-P."/>
            <person name="Flavell R.B."/>
            <person name="Feldmann K.A."/>
        </authorList>
    </citation>
    <scope>NUCLEOTIDE SEQUENCE [LARGE SCALE MRNA]</scope>
</reference>
<reference key="6">
    <citation type="journal article" date="2003" name="Plant Cell">
        <title>The Arabidopsis basic/helix-loop-helix transcription factor family.</title>
        <authorList>
            <person name="Toledo-Ortiz G."/>
            <person name="Huq E."/>
            <person name="Quail P.H."/>
        </authorList>
    </citation>
    <scope>GENE FAMILY</scope>
    <scope>NOMENCLATURE</scope>
</reference>
<reference key="7">
    <citation type="journal article" date="2003" name="Plant Cell">
        <title>Update on the basic helix-loop-helix transcription factor gene family in Arabidopsis thaliana.</title>
        <authorList>
            <person name="Bailey P.C."/>
            <person name="Martin C."/>
            <person name="Toledo-Ortiz G."/>
            <person name="Quail P.H."/>
            <person name="Huq E."/>
            <person name="Heim M.A."/>
            <person name="Jakoby M."/>
            <person name="Werber M."/>
            <person name="Weisshaar B."/>
        </authorList>
    </citation>
    <scope>GENE FAMILY</scope>
    <scope>NOMENCLATURE</scope>
</reference>
<reference key="8">
    <citation type="journal article" date="2006" name="Plant Cell Physiol.">
        <title>Overexpression of PRE1 and its homologous genes activates gibberellin-dependent responses in Arabidopsis thaliana.</title>
        <authorList>
            <person name="Lee S."/>
            <person name="Lee S."/>
            <person name="Yang K.Y."/>
            <person name="Kim Y.M."/>
            <person name="Park S.Y."/>
            <person name="Kim S.Y."/>
            <person name="Soh M.S."/>
        </authorList>
    </citation>
    <scope>FUNCTION</scope>
    <scope>TISSUE SPECIFICITY</scope>
    <scope>INDUCTION</scope>
</reference>
<reference key="9">
    <citation type="journal article" date="2009" name="Plant Cell">
        <title>Regulation of Arabidopsis brassinosteroid signaling by atypical basic helix-loop-helix proteins.</title>
        <authorList>
            <person name="Wang H."/>
            <person name="Zhu Y."/>
            <person name="Fujioka S."/>
            <person name="Asami T."/>
            <person name="Li J."/>
            <person name="Li J."/>
        </authorList>
    </citation>
    <scope>FUNCTION</scope>
    <scope>TISSUE SPECIFICITY</scope>
    <scope>SUBCELLULAR LOCATION</scope>
    <scope>INTERACTION WITH BHLH147; BHLH148; BHLH149 AND BHLH150</scope>
    <source>
        <strain>cv. Columbia</strain>
    </source>
</reference>
<reference key="10">
    <citation type="journal article" date="2010" name="Nature">
        <title>MONOPTEROS controls embryonic root initiation by regulating a mobile transcription factor.</title>
        <authorList>
            <person name="Schlereth A."/>
            <person name="Moller B."/>
            <person name="Liu W."/>
            <person name="Kientz M."/>
            <person name="Flipse J."/>
            <person name="Rademacher E.H."/>
            <person name="Schmid M."/>
            <person name="Jurgens G."/>
            <person name="Weijers D."/>
        </authorList>
    </citation>
    <scope>FUNCTION</scope>
    <scope>DEVELOPMENTAL STAGE</scope>
    <scope>SUBCELLULAR LOCATION</scope>
    <source>
        <strain>cv. Columbia</strain>
    </source>
</reference>
<reference key="11">
    <citation type="journal article" date="2011" name="Curr. Biol.">
        <title>An essential protein that interacts with endosomes and promotes movement of the SHORT-ROOT transcription factor.</title>
        <authorList>
            <person name="Koizumi K."/>
            <person name="Wu S."/>
            <person name="MacRae-Crerar A."/>
            <person name="Gallagher K.L."/>
        </authorList>
    </citation>
    <scope>INTERACTION WITH SIEL</scope>
</reference>
<reference key="12">
    <citation type="journal article" date="2012" name="Physiol. Plantarum">
        <title>The non-DNA-binding bHLH transcription factor PRE3/bHLH135/ATBS1/TMO7 is involved in the regulation of light signaling pathway in Arabidopsis.</title>
        <authorList>
            <person name="Castelain M."/>
            <person name="Le Hir R."/>
            <person name="Bellini C."/>
        </authorList>
    </citation>
    <scope>FUNCTION</scope>
    <scope>TISSUE SPECIFICITY</scope>
</reference>
<reference key="13">
    <citation type="journal article" date="2012" name="Plant Cell">
        <title>A triantagonistic basic helix-loop-helix system regulates cell elongation in Arabidopsis.</title>
        <authorList>
            <person name="Ikeda M."/>
            <person name="Fujiwara S."/>
            <person name="Mitsuda N."/>
            <person name="Ohme-Takagi M."/>
        </authorList>
    </citation>
    <scope>INTERACTION WITH IBH1</scope>
</reference>
<dbReference type="EMBL" id="AC011765">
    <property type="protein sequence ID" value="AAG52350.1"/>
    <property type="molecule type" value="Genomic_DNA"/>
</dbReference>
<dbReference type="EMBL" id="CP002684">
    <property type="protein sequence ID" value="AEE35600.1"/>
    <property type="molecule type" value="Genomic_DNA"/>
</dbReference>
<dbReference type="EMBL" id="BT003046">
    <property type="protein sequence ID" value="AAO23611.1"/>
    <property type="molecule type" value="mRNA"/>
</dbReference>
<dbReference type="EMBL" id="AK227395">
    <property type="protein sequence ID" value="BAE99399.1"/>
    <property type="molecule type" value="mRNA"/>
</dbReference>
<dbReference type="EMBL" id="AY088286">
    <property type="protein sequence ID" value="AAM65825.1"/>
    <property type="molecule type" value="mRNA"/>
</dbReference>
<dbReference type="PIR" id="A96774">
    <property type="entry name" value="A96774"/>
</dbReference>
<dbReference type="RefSeq" id="NP_177590.1">
    <property type="nucleotide sequence ID" value="NM_106110.3"/>
</dbReference>
<dbReference type="SMR" id="Q9CA64"/>
<dbReference type="BioGRID" id="29010">
    <property type="interactions" value="5"/>
</dbReference>
<dbReference type="FunCoup" id="Q9CA64">
    <property type="interactions" value="110"/>
</dbReference>
<dbReference type="IntAct" id="Q9CA64">
    <property type="interactions" value="4"/>
</dbReference>
<dbReference type="STRING" id="3702.Q9CA64"/>
<dbReference type="PaxDb" id="3702-AT1G74500.1"/>
<dbReference type="ProteomicsDB" id="236598"/>
<dbReference type="EnsemblPlants" id="AT1G74500.1">
    <property type="protein sequence ID" value="AT1G74500.1"/>
    <property type="gene ID" value="AT1G74500"/>
</dbReference>
<dbReference type="GeneID" id="843791"/>
<dbReference type="Gramene" id="AT1G74500.1">
    <property type="protein sequence ID" value="AT1G74500.1"/>
    <property type="gene ID" value="AT1G74500"/>
</dbReference>
<dbReference type="KEGG" id="ath:AT1G74500"/>
<dbReference type="Araport" id="AT1G74500"/>
<dbReference type="TAIR" id="AT1G74500">
    <property type="gene designation" value="BS1"/>
</dbReference>
<dbReference type="eggNOG" id="ENOG502S4KP">
    <property type="taxonomic scope" value="Eukaryota"/>
</dbReference>
<dbReference type="HOGENOM" id="CLU_183267_0_0_1"/>
<dbReference type="InParanoid" id="Q9CA64"/>
<dbReference type="OMA" id="APSMITD"/>
<dbReference type="OrthoDB" id="988630at2759"/>
<dbReference type="PhylomeDB" id="Q9CA64"/>
<dbReference type="PRO" id="PR:Q9CA64"/>
<dbReference type="Proteomes" id="UP000006548">
    <property type="component" value="Chromosome 1"/>
</dbReference>
<dbReference type="ExpressionAtlas" id="Q9CA64">
    <property type="expression patterns" value="baseline and differential"/>
</dbReference>
<dbReference type="GO" id="GO:0005737">
    <property type="term" value="C:cytoplasm"/>
    <property type="evidence" value="ECO:0000314"/>
    <property type="project" value="TAIR"/>
</dbReference>
<dbReference type="GO" id="GO:0005634">
    <property type="term" value="C:nucleus"/>
    <property type="evidence" value="ECO:0000314"/>
    <property type="project" value="TAIR"/>
</dbReference>
<dbReference type="GO" id="GO:0003700">
    <property type="term" value="F:DNA-binding transcription factor activity"/>
    <property type="evidence" value="ECO:0000250"/>
    <property type="project" value="TAIR"/>
</dbReference>
<dbReference type="GO" id="GO:0046983">
    <property type="term" value="F:protein dimerization activity"/>
    <property type="evidence" value="ECO:0007669"/>
    <property type="project" value="InterPro"/>
</dbReference>
<dbReference type="GO" id="GO:0000976">
    <property type="term" value="F:transcription cis-regulatory region binding"/>
    <property type="evidence" value="ECO:0000353"/>
    <property type="project" value="TAIR"/>
</dbReference>
<dbReference type="GO" id="GO:0009742">
    <property type="term" value="P:brassinosteroid mediated signaling pathway"/>
    <property type="evidence" value="ECO:0000316"/>
    <property type="project" value="TAIR"/>
</dbReference>
<dbReference type="GO" id="GO:0010086">
    <property type="term" value="P:embryonic root morphogenesis"/>
    <property type="evidence" value="ECO:0000315"/>
    <property type="project" value="TAIR"/>
</dbReference>
<dbReference type="GO" id="GO:0009740">
    <property type="term" value="P:gibberellic acid mediated signaling pathway"/>
    <property type="evidence" value="ECO:0007669"/>
    <property type="project" value="UniProtKB-KW"/>
</dbReference>
<dbReference type="GO" id="GO:0040008">
    <property type="term" value="P:regulation of growth"/>
    <property type="evidence" value="ECO:0007669"/>
    <property type="project" value="InterPro"/>
</dbReference>
<dbReference type="GO" id="GO:0048364">
    <property type="term" value="P:root development"/>
    <property type="evidence" value="ECO:0000270"/>
    <property type="project" value="TAIR"/>
</dbReference>
<dbReference type="CDD" id="cd11442">
    <property type="entry name" value="bHLH_AtPRE_like"/>
    <property type="match status" value="1"/>
</dbReference>
<dbReference type="FunFam" id="4.10.280.10:FF:000082">
    <property type="entry name" value="Transcription factor ILI6"/>
    <property type="match status" value="1"/>
</dbReference>
<dbReference type="Gene3D" id="4.10.280.10">
    <property type="entry name" value="Helix-loop-helix DNA-binding domain"/>
    <property type="match status" value="1"/>
</dbReference>
<dbReference type="InterPro" id="IPR011598">
    <property type="entry name" value="bHLH_dom"/>
</dbReference>
<dbReference type="InterPro" id="IPR036638">
    <property type="entry name" value="HLH_DNA-bd_sf"/>
</dbReference>
<dbReference type="InterPro" id="IPR044293">
    <property type="entry name" value="PRE"/>
</dbReference>
<dbReference type="PANTHER" id="PTHR46446">
    <property type="entry name" value="TRANSCRIPTION FACTOR PRE"/>
    <property type="match status" value="1"/>
</dbReference>
<dbReference type="PANTHER" id="PTHR46446:SF3">
    <property type="entry name" value="TRANSCRIPTION FACTOR PRE3"/>
    <property type="match status" value="1"/>
</dbReference>
<dbReference type="Pfam" id="PF23174">
    <property type="entry name" value="bHLH_ILI"/>
    <property type="match status" value="1"/>
</dbReference>
<dbReference type="SUPFAM" id="SSF47459">
    <property type="entry name" value="HLH, helix-loop-helix DNA-binding domain"/>
    <property type="match status" value="1"/>
</dbReference>
<dbReference type="PROSITE" id="PS50888">
    <property type="entry name" value="BHLH"/>
    <property type="match status" value="1"/>
</dbReference>
<accession>Q9CA64</accession>
<sequence>MSGRRSRSRQSSGTSRISEDQINDLIIKLQQLLPELRDSRRSDKVSAARVLQDTCNYIRNLHREVDDLSERLSELLANSDTAQAALIRSLLTQ</sequence>